<keyword id="KW-1035">Host cytoplasm</keyword>
<keyword id="KW-0426">Late protein</keyword>
<keyword id="KW-1185">Reference proteome</keyword>
<keyword id="KW-0946">Virion</keyword>
<name>PG091_MONPV</name>
<feature type="chain" id="PRO_0000457683" description="Protein OPG091">
    <location>
        <begin position="1"/>
        <end position="165"/>
    </location>
</feature>
<proteinExistence type="inferred from homology"/>
<accession>A0A7H0DN63</accession>
<organismHost>
    <name type="scientific">Cynomys gunnisoni</name>
    <name type="common">Gunnison's prairie dog</name>
    <name type="synonym">Spermophilus gunnisoni</name>
    <dbReference type="NCBI Taxonomy" id="45479"/>
</organismHost>
<organismHost>
    <name type="scientific">Cynomys leucurus</name>
    <name type="common">White-tailed prairie dog</name>
    <dbReference type="NCBI Taxonomy" id="99825"/>
</organismHost>
<organismHost>
    <name type="scientific">Cynomys ludovicianus</name>
    <name type="common">Black-tailed prairie dog</name>
    <dbReference type="NCBI Taxonomy" id="45480"/>
</organismHost>
<organismHost>
    <name type="scientific">Cynomys mexicanus</name>
    <name type="common">Mexican prairie dog</name>
    <dbReference type="NCBI Taxonomy" id="99826"/>
</organismHost>
<organismHost>
    <name type="scientific">Cynomys parvidens</name>
    <name type="common">Utah prairie dog</name>
    <dbReference type="NCBI Taxonomy" id="99827"/>
</organismHost>
<organismHost>
    <name type="scientific">Gliridae</name>
    <name type="common">dormice</name>
    <dbReference type="NCBI Taxonomy" id="30650"/>
</organismHost>
<organismHost>
    <name type="scientific">Heliosciurus ruwenzorii</name>
    <name type="common">Ruwenzori sun squirrel</name>
    <dbReference type="NCBI Taxonomy" id="226685"/>
</organismHost>
<organismHost>
    <name type="scientific">Homo sapiens</name>
    <name type="common">Human</name>
    <dbReference type="NCBI Taxonomy" id="9606"/>
</organismHost>
<organismHost>
    <name type="scientific">Mus musculus</name>
    <name type="common">Mouse</name>
    <dbReference type="NCBI Taxonomy" id="10090"/>
</organismHost>
<sequence length="165" mass="19033">MDPVNFIKTYAPRGSIIFINYAMSLTSHLNPSIEKHVGIYYGTLLSEHLVVESTYRKGVRIVPLDRFFEGYLSAKVYMLENIQVMKIAADMSLTLLGIPYGFGHDRMYCFKLVAECYKNAGIDTSSKRILGKDIFLSQNFTDDNRWIKIYDSNNLTFWQIDYLKG</sequence>
<gene>
    <name type="primary">OPG091</name>
    <name type="ORF">MPXVgp076</name>
</gene>
<reference key="1">
    <citation type="journal article" date="2022" name="J. Infect. Dis.">
        <title>Exportation of Monkeypox virus from the African continent.</title>
        <authorList>
            <person name="Mauldin M.R."/>
            <person name="McCollum A.M."/>
            <person name="Nakazawa Y.J."/>
            <person name="Mandra A."/>
            <person name="Whitehouse E.R."/>
            <person name="Davidson W."/>
            <person name="Zhao H."/>
            <person name="Gao J."/>
            <person name="Li Y."/>
            <person name="Doty J."/>
            <person name="Yinka-Ogunleye A."/>
            <person name="Akinpelu A."/>
            <person name="Aruna O."/>
            <person name="Naidoo D."/>
            <person name="Lewandowski K."/>
            <person name="Afrough B."/>
            <person name="Graham V."/>
            <person name="Aarons E."/>
            <person name="Hewson R."/>
            <person name="Vipond R."/>
            <person name="Dunning J."/>
            <person name="Chand M."/>
            <person name="Brown C."/>
            <person name="Cohen-Gihon I."/>
            <person name="Erez N."/>
            <person name="Shifman O."/>
            <person name="Israeli O."/>
            <person name="Sharon M."/>
            <person name="Schwartz E."/>
            <person name="Beth-Din A."/>
            <person name="Zvi A."/>
            <person name="Mak T.M."/>
            <person name="Ng Y.K."/>
            <person name="Cui L."/>
            <person name="Lin R.T.P."/>
            <person name="Olson V.A."/>
            <person name="Brooks T."/>
            <person name="Paran N."/>
            <person name="Ihekweazu C."/>
            <person name="Reynolds M.G."/>
        </authorList>
    </citation>
    <scope>NUCLEOTIDE SEQUENCE [LARGE SCALE GENOMIC DNA]</scope>
    <source>
        <strain>MPXV-M5312_HM12_Rivers</strain>
    </source>
</reference>
<dbReference type="EMBL" id="MT903340">
    <property type="protein sequence ID" value="QNP12946.1"/>
    <property type="molecule type" value="Genomic_DNA"/>
</dbReference>
<dbReference type="RefSeq" id="YP_010377073.1">
    <property type="nucleotide sequence ID" value="NC_063383.1"/>
</dbReference>
<dbReference type="SMR" id="A0A7H0DN63"/>
<dbReference type="GeneID" id="72551486"/>
<dbReference type="Proteomes" id="UP000516359">
    <property type="component" value="Genome"/>
</dbReference>
<dbReference type="GO" id="GO:0030430">
    <property type="term" value="C:host cell cytoplasm"/>
    <property type="evidence" value="ECO:0007669"/>
    <property type="project" value="UniProtKB-SubCell"/>
</dbReference>
<dbReference type="GO" id="GO:0044423">
    <property type="term" value="C:virion component"/>
    <property type="evidence" value="ECO:0007669"/>
    <property type="project" value="UniProtKB-KW"/>
</dbReference>
<dbReference type="Gene3D" id="3.90.1720.10">
    <property type="entry name" value="endopeptidase domain like (from Nostoc punctiforme)"/>
    <property type="match status" value="1"/>
</dbReference>
<dbReference type="InterPro" id="IPR038765">
    <property type="entry name" value="Papain-like_cys_pep_sf"/>
</dbReference>
<dbReference type="InterPro" id="IPR024453">
    <property type="entry name" value="Peptidase_C92"/>
</dbReference>
<dbReference type="Pfam" id="PF05708">
    <property type="entry name" value="Peptidase_C92"/>
    <property type="match status" value="1"/>
</dbReference>
<dbReference type="SUPFAM" id="SSF54001">
    <property type="entry name" value="Cysteine proteinases"/>
    <property type="match status" value="1"/>
</dbReference>
<evidence type="ECO:0000250" key="1">
    <source>
        <dbReference type="UniProtKB" id="Q80HW9"/>
    </source>
</evidence>
<evidence type="ECO:0000305" key="2"/>
<organism>
    <name type="scientific">Monkeypox virus</name>
    <dbReference type="NCBI Taxonomy" id="10244"/>
    <lineage>
        <taxon>Viruses</taxon>
        <taxon>Varidnaviria</taxon>
        <taxon>Bamfordvirae</taxon>
        <taxon>Nucleocytoviricota</taxon>
        <taxon>Pokkesviricetes</taxon>
        <taxon>Chitovirales</taxon>
        <taxon>Poxviridae</taxon>
        <taxon>Chordopoxvirinae</taxon>
        <taxon>Orthopoxvirus</taxon>
    </lineage>
</organism>
<protein>
    <recommendedName>
        <fullName>Protein OPG091</fullName>
    </recommendedName>
</protein>
<comment type="function">
    <text evidence="1">Contributes to virulence in host but not to replication in cell culture.</text>
</comment>
<comment type="subcellular location">
    <subcellularLocation>
        <location evidence="1">Virion</location>
    </subcellularLocation>
    <subcellularLocation>
        <location evidence="1">Host cytoplasm</location>
    </subcellularLocation>
    <text evidence="1">Localized to the interior of virions, primarily between the membrane and core.</text>
</comment>
<comment type="miscellaneous">
    <text evidence="1">Displays sequence similarity with a group of bacterial permuted NlpC/P60 proteins. Thus, the ancestor of the OPG091 gene might have been acquired from a bacterial source at the onset of poxvirus evolution.</text>
</comment>
<comment type="similarity">
    <text evidence="2">Belongs to the orthopoxvirus OPG091 family.</text>
</comment>